<comment type="function">
    <text evidence="1">Quinone reductase that provides resistance to thiol-specific stress caused by electrophilic quinones.</text>
</comment>
<comment type="function">
    <text evidence="1">Also exhibits azoreductase activity. Catalyzes the reductive cleavage of the azo bond in aromatic azo compounds to the corresponding amines.</text>
</comment>
<comment type="catalytic activity">
    <reaction evidence="1">
        <text>2 a quinone + NADH + H(+) = 2 a 1,4-benzosemiquinone + NAD(+)</text>
        <dbReference type="Rhea" id="RHEA:65952"/>
        <dbReference type="ChEBI" id="CHEBI:15378"/>
        <dbReference type="ChEBI" id="CHEBI:57540"/>
        <dbReference type="ChEBI" id="CHEBI:57945"/>
        <dbReference type="ChEBI" id="CHEBI:132124"/>
        <dbReference type="ChEBI" id="CHEBI:134225"/>
    </reaction>
</comment>
<comment type="catalytic activity">
    <reaction evidence="1">
        <text>N,N-dimethyl-1,4-phenylenediamine + anthranilate + 2 NAD(+) = 2-(4-dimethylaminophenyl)diazenylbenzoate + 2 NADH + 2 H(+)</text>
        <dbReference type="Rhea" id="RHEA:55872"/>
        <dbReference type="ChEBI" id="CHEBI:15378"/>
        <dbReference type="ChEBI" id="CHEBI:15783"/>
        <dbReference type="ChEBI" id="CHEBI:16567"/>
        <dbReference type="ChEBI" id="CHEBI:57540"/>
        <dbReference type="ChEBI" id="CHEBI:57945"/>
        <dbReference type="ChEBI" id="CHEBI:71579"/>
        <dbReference type="EC" id="1.7.1.17"/>
    </reaction>
</comment>
<comment type="cofactor">
    <cofactor evidence="1">
        <name>FMN</name>
        <dbReference type="ChEBI" id="CHEBI:58210"/>
    </cofactor>
    <text evidence="1">Binds 1 FMN per subunit.</text>
</comment>
<comment type="subunit">
    <text evidence="1">Homodimer.</text>
</comment>
<comment type="similarity">
    <text evidence="1">Belongs to the azoreductase type 1 family.</text>
</comment>
<feature type="chain" id="PRO_1000138974" description="FMN-dependent NADH:quinone oxidoreductase">
    <location>
        <begin position="1"/>
        <end position="195"/>
    </location>
</feature>
<feature type="binding site" evidence="1">
    <location>
        <position position="10"/>
    </location>
    <ligand>
        <name>FMN</name>
        <dbReference type="ChEBI" id="CHEBI:58210"/>
    </ligand>
</feature>
<feature type="binding site" evidence="1">
    <location>
        <begin position="16"/>
        <end position="18"/>
    </location>
    <ligand>
        <name>FMN</name>
        <dbReference type="ChEBI" id="CHEBI:58210"/>
    </ligand>
</feature>
<feature type="binding site" evidence="1">
    <location>
        <begin position="88"/>
        <end position="91"/>
    </location>
    <ligand>
        <name>FMN</name>
        <dbReference type="ChEBI" id="CHEBI:58210"/>
    </ligand>
</feature>
<sequence>MRKILHIRSSIKEENSVSRKIGDDLISHFKSTDKVKVSERDLVDNSVEHINPDFINAMANNNQDRLATSNKLIEELFENDIIAIESPMYNFSIPSTLKSWIDNIMIARKTFLYTANGPEGLVKNKKAILVLSKGNIYSEGAAKPLDFQENYLKTILNFIGINDITVICAEGVDLNAEIREKSLKQVEQQIKNLSI</sequence>
<protein>
    <recommendedName>
        <fullName evidence="1">FMN-dependent NADH:quinone oxidoreductase</fullName>
        <ecNumber evidence="1">1.6.5.-</ecNumber>
    </recommendedName>
    <alternativeName>
        <fullName evidence="1">Azo-dye reductase</fullName>
    </alternativeName>
    <alternativeName>
        <fullName evidence="1">FMN-dependent NADH-azo compound oxidoreductase</fullName>
    </alternativeName>
    <alternativeName>
        <fullName evidence="1">FMN-dependent NADH-azoreductase</fullName>
        <ecNumber evidence="1">1.7.1.17</ecNumber>
    </alternativeName>
</protein>
<reference key="1">
    <citation type="submission" date="2007-12" db="EMBL/GenBank/DDBJ databases">
        <title>Complete sequence of chromosome of Francisella philomiragia subsp. philomiragia ATCC 25017.</title>
        <authorList>
            <consortium name="US DOE Joint Genome Institute"/>
            <person name="Copeland A."/>
            <person name="Lucas S."/>
            <person name="Lapidus A."/>
            <person name="Barry K."/>
            <person name="Detter J.C."/>
            <person name="Glavina del Rio T."/>
            <person name="Hammon N."/>
            <person name="Israni S."/>
            <person name="Dalin E."/>
            <person name="Tice H."/>
            <person name="Pitluck S."/>
            <person name="Chain P."/>
            <person name="Malfatti S."/>
            <person name="Shin M."/>
            <person name="Vergez L."/>
            <person name="Schmutz J."/>
            <person name="Larimer F."/>
            <person name="Land M."/>
            <person name="Hauser L."/>
            <person name="Richardson P."/>
        </authorList>
    </citation>
    <scope>NUCLEOTIDE SEQUENCE [LARGE SCALE GENOMIC DNA]</scope>
    <source>
        <strain>ATCC 25017 / CCUG 19701 / FSC 153 / O#319-036</strain>
    </source>
</reference>
<name>AZOR_FRAP2</name>
<dbReference type="EC" id="1.6.5.-" evidence="1"/>
<dbReference type="EC" id="1.7.1.17" evidence="1"/>
<dbReference type="EMBL" id="CP000937">
    <property type="protein sequence ID" value="ABZ87107.1"/>
    <property type="molecule type" value="Genomic_DNA"/>
</dbReference>
<dbReference type="SMR" id="B0TWJ9"/>
<dbReference type="KEGG" id="fph:Fphi_0884"/>
<dbReference type="eggNOG" id="COG1182">
    <property type="taxonomic scope" value="Bacteria"/>
</dbReference>
<dbReference type="HOGENOM" id="CLU_088964_0_0_6"/>
<dbReference type="GO" id="GO:0009055">
    <property type="term" value="F:electron transfer activity"/>
    <property type="evidence" value="ECO:0007669"/>
    <property type="project" value="UniProtKB-UniRule"/>
</dbReference>
<dbReference type="GO" id="GO:0010181">
    <property type="term" value="F:FMN binding"/>
    <property type="evidence" value="ECO:0007669"/>
    <property type="project" value="UniProtKB-UniRule"/>
</dbReference>
<dbReference type="GO" id="GO:0016652">
    <property type="term" value="F:oxidoreductase activity, acting on NAD(P)H as acceptor"/>
    <property type="evidence" value="ECO:0007669"/>
    <property type="project" value="UniProtKB-UniRule"/>
</dbReference>
<dbReference type="GO" id="GO:0016655">
    <property type="term" value="F:oxidoreductase activity, acting on NAD(P)H, quinone or similar compound as acceptor"/>
    <property type="evidence" value="ECO:0007669"/>
    <property type="project" value="InterPro"/>
</dbReference>
<dbReference type="Gene3D" id="3.40.50.360">
    <property type="match status" value="1"/>
</dbReference>
<dbReference type="HAMAP" id="MF_01216">
    <property type="entry name" value="Azoreductase_type1"/>
    <property type="match status" value="1"/>
</dbReference>
<dbReference type="InterPro" id="IPR003680">
    <property type="entry name" value="Flavodoxin_fold"/>
</dbReference>
<dbReference type="InterPro" id="IPR029039">
    <property type="entry name" value="Flavoprotein-like_sf"/>
</dbReference>
<dbReference type="InterPro" id="IPR050104">
    <property type="entry name" value="FMN-dep_NADH:Q_OxRdtase_AzoR1"/>
</dbReference>
<dbReference type="InterPro" id="IPR023048">
    <property type="entry name" value="NADH:quinone_OxRdtase_FMN_depd"/>
</dbReference>
<dbReference type="PANTHER" id="PTHR43741">
    <property type="entry name" value="FMN-DEPENDENT NADH-AZOREDUCTASE 1"/>
    <property type="match status" value="1"/>
</dbReference>
<dbReference type="PANTHER" id="PTHR43741:SF4">
    <property type="entry name" value="FMN-DEPENDENT NADH:QUINONE OXIDOREDUCTASE"/>
    <property type="match status" value="1"/>
</dbReference>
<dbReference type="Pfam" id="PF02525">
    <property type="entry name" value="Flavodoxin_2"/>
    <property type="match status" value="1"/>
</dbReference>
<dbReference type="SUPFAM" id="SSF52218">
    <property type="entry name" value="Flavoproteins"/>
    <property type="match status" value="1"/>
</dbReference>
<evidence type="ECO:0000255" key="1">
    <source>
        <dbReference type="HAMAP-Rule" id="MF_01216"/>
    </source>
</evidence>
<organism>
    <name type="scientific">Francisella philomiragia subsp. philomiragia (strain ATCC 25017 / CCUG 19701 / FSC 153 / O#319-036)</name>
    <dbReference type="NCBI Taxonomy" id="484022"/>
    <lineage>
        <taxon>Bacteria</taxon>
        <taxon>Pseudomonadati</taxon>
        <taxon>Pseudomonadota</taxon>
        <taxon>Gammaproteobacteria</taxon>
        <taxon>Thiotrichales</taxon>
        <taxon>Francisellaceae</taxon>
        <taxon>Francisella</taxon>
    </lineage>
</organism>
<gene>
    <name evidence="1" type="primary">azoR</name>
    <name type="ordered locus">Fphi_0884</name>
</gene>
<accession>B0TWJ9</accession>
<proteinExistence type="inferred from homology"/>
<keyword id="KW-0285">Flavoprotein</keyword>
<keyword id="KW-0288">FMN</keyword>
<keyword id="KW-0520">NAD</keyword>
<keyword id="KW-0560">Oxidoreductase</keyword>